<comment type="catalytic activity">
    <reaction evidence="1">
        <text>beta-D-fructose 1,6-bisphosphate + H2O = beta-D-fructose 6-phosphate + phosphate</text>
        <dbReference type="Rhea" id="RHEA:11064"/>
        <dbReference type="ChEBI" id="CHEBI:15377"/>
        <dbReference type="ChEBI" id="CHEBI:32966"/>
        <dbReference type="ChEBI" id="CHEBI:43474"/>
        <dbReference type="ChEBI" id="CHEBI:57634"/>
        <dbReference type="EC" id="3.1.3.11"/>
    </reaction>
</comment>
<comment type="cofactor">
    <cofactor evidence="1">
        <name>Mn(2+)</name>
        <dbReference type="ChEBI" id="CHEBI:29035"/>
    </cofactor>
</comment>
<comment type="pathway">
    <text evidence="1">Carbohydrate biosynthesis; gluconeogenesis.</text>
</comment>
<comment type="similarity">
    <text evidence="1">Belongs to the FBPase class 3 family.</text>
</comment>
<accession>Q834X4</accession>
<organism>
    <name type="scientific">Enterococcus faecalis (strain ATCC 700802 / V583)</name>
    <dbReference type="NCBI Taxonomy" id="226185"/>
    <lineage>
        <taxon>Bacteria</taxon>
        <taxon>Bacillati</taxon>
        <taxon>Bacillota</taxon>
        <taxon>Bacilli</taxon>
        <taxon>Lactobacillales</taxon>
        <taxon>Enterococcaceae</taxon>
        <taxon>Enterococcus</taxon>
    </lineage>
</organism>
<evidence type="ECO:0000255" key="1">
    <source>
        <dbReference type="HAMAP-Rule" id="MF_01854"/>
    </source>
</evidence>
<sequence length="626" mass="72544">MATLNRDQQIEEIINLEAILNLPKGTEHFVSDLHGEFEAFDHILRNGSGRIREKVQFLFKQELNAHQMDELCFIIYYPEEKLTLLENESALSYEWWLLTIRRLVEIVRSSSMKYTRSKVRKALPETYGYILEELIYQYDETTTKNGYYQQIIEKIILLGEAKRFVTELAYLIQRLIIDHLHVIGDIYDRGPAPDKIMDRLMSYHSLDIQLGNHDMIWLAAYSGSLACLANVVRICARYGNLDLLEERYAIDLTALKKFSLETYKENPAFAPKKNPYRALTEAEKQVAMRVQQAIAIIQEKLEGQIIGRRPDFNLAHRLRLDKIQGETITFDECRYTLINSCFQTVSEEQPYQLTREEKQIIDDLLTQFQSSPRLTKHMRFLMEKASLYLVYNQNLLIHGCLPLNADGTFQAYTFKGHSYSGKALVDFFQEMLEEAYAQPASTDDYATDCLWYLWCGEGSSLFGKRAMKTFERYFLAEKETHYEEKNPYYSLRDTVEVCERILDEFEVTGENRHIINGHTPVKRTKGESPIKANGTLLVIDGGFSKSYQTITGIAGYTLLYNSFGLQLTAHKSFSSKETAILNNQDIHSIKQVIDRPLQRLLVKDTTIGKELLKQSQALQKQMKQNQ</sequence>
<gene>
    <name evidence="1" type="primary">fbp</name>
    <name type="ordered locus">EF_1503</name>
</gene>
<proteinExistence type="inferred from homology"/>
<dbReference type="EC" id="3.1.3.11" evidence="1"/>
<dbReference type="EMBL" id="AE016830">
    <property type="protein sequence ID" value="AAO81294.1"/>
    <property type="molecule type" value="Genomic_DNA"/>
</dbReference>
<dbReference type="RefSeq" id="NP_815224.1">
    <property type="nucleotide sequence ID" value="NC_004668.1"/>
</dbReference>
<dbReference type="RefSeq" id="WP_002361779.1">
    <property type="nucleotide sequence ID" value="NZ_KE136528.1"/>
</dbReference>
<dbReference type="STRING" id="226185.EF_1503"/>
<dbReference type="EnsemblBacteria" id="AAO81294">
    <property type="protein sequence ID" value="AAO81294"/>
    <property type="gene ID" value="EF_1503"/>
</dbReference>
<dbReference type="KEGG" id="efa:EF1503"/>
<dbReference type="PATRIC" id="fig|226185.45.peg.1997"/>
<dbReference type="eggNOG" id="COG3855">
    <property type="taxonomic scope" value="Bacteria"/>
</dbReference>
<dbReference type="HOGENOM" id="CLU_028392_2_0_9"/>
<dbReference type="UniPathway" id="UPA00138"/>
<dbReference type="Proteomes" id="UP000001415">
    <property type="component" value="Chromosome"/>
</dbReference>
<dbReference type="GO" id="GO:0042132">
    <property type="term" value="F:fructose 1,6-bisphosphate 1-phosphatase activity"/>
    <property type="evidence" value="ECO:0007669"/>
    <property type="project" value="UniProtKB-UniRule"/>
</dbReference>
<dbReference type="GO" id="GO:0006094">
    <property type="term" value="P:gluconeogenesis"/>
    <property type="evidence" value="ECO:0007669"/>
    <property type="project" value="UniProtKB-UniRule"/>
</dbReference>
<dbReference type="Gene3D" id="3.60.21.10">
    <property type="match status" value="1"/>
</dbReference>
<dbReference type="HAMAP" id="MF_01854">
    <property type="entry name" value="FBPase_class3"/>
    <property type="match status" value="1"/>
</dbReference>
<dbReference type="InterPro" id="IPR009164">
    <property type="entry name" value="FBPtase_class3"/>
</dbReference>
<dbReference type="InterPro" id="IPR029052">
    <property type="entry name" value="Metallo-depent_PP-like"/>
</dbReference>
<dbReference type="Pfam" id="PF06874">
    <property type="entry name" value="FBPase_2"/>
    <property type="match status" value="1"/>
</dbReference>
<dbReference type="PIRSF" id="PIRSF000906">
    <property type="entry name" value="FBPtase_Bacill"/>
    <property type="match status" value="1"/>
</dbReference>
<dbReference type="SUPFAM" id="SSF56300">
    <property type="entry name" value="Metallo-dependent phosphatases"/>
    <property type="match status" value="2"/>
</dbReference>
<name>F16PC_ENTFA</name>
<keyword id="KW-0119">Carbohydrate metabolism</keyword>
<keyword id="KW-0378">Hydrolase</keyword>
<keyword id="KW-0464">Manganese</keyword>
<keyword id="KW-1185">Reference proteome</keyword>
<protein>
    <recommendedName>
        <fullName evidence="1">Fructose-1,6-bisphosphatase class 3</fullName>
        <shortName evidence="1">FBPase class 3</shortName>
        <ecNumber evidence="1">3.1.3.11</ecNumber>
    </recommendedName>
    <alternativeName>
        <fullName evidence="1">D-fructose-1,6-bisphosphate 1-phosphohydrolase class 3</fullName>
    </alternativeName>
</protein>
<feature type="chain" id="PRO_0000363091" description="Fructose-1,6-bisphosphatase class 3">
    <location>
        <begin position="1"/>
        <end position="626"/>
    </location>
</feature>
<reference key="1">
    <citation type="journal article" date="2003" name="Science">
        <title>Role of mobile DNA in the evolution of vancomycin-resistant Enterococcus faecalis.</title>
        <authorList>
            <person name="Paulsen I.T."/>
            <person name="Banerjei L."/>
            <person name="Myers G.S.A."/>
            <person name="Nelson K.E."/>
            <person name="Seshadri R."/>
            <person name="Read T.D."/>
            <person name="Fouts D.E."/>
            <person name="Eisen J.A."/>
            <person name="Gill S.R."/>
            <person name="Heidelberg J.F."/>
            <person name="Tettelin H."/>
            <person name="Dodson R.J."/>
            <person name="Umayam L.A."/>
            <person name="Brinkac L.M."/>
            <person name="Beanan M.J."/>
            <person name="Daugherty S.C."/>
            <person name="DeBoy R.T."/>
            <person name="Durkin S.A."/>
            <person name="Kolonay J.F."/>
            <person name="Madupu R."/>
            <person name="Nelson W.C."/>
            <person name="Vamathevan J.J."/>
            <person name="Tran B."/>
            <person name="Upton J."/>
            <person name="Hansen T."/>
            <person name="Shetty J."/>
            <person name="Khouri H.M."/>
            <person name="Utterback T.R."/>
            <person name="Radune D."/>
            <person name="Ketchum K.A."/>
            <person name="Dougherty B.A."/>
            <person name="Fraser C.M."/>
        </authorList>
    </citation>
    <scope>NUCLEOTIDE SEQUENCE [LARGE SCALE GENOMIC DNA]</scope>
    <source>
        <strain>ATCC 700802 / V583</strain>
    </source>
</reference>